<evidence type="ECO:0000255" key="1">
    <source>
        <dbReference type="HAMAP-Rule" id="MF_01227"/>
    </source>
</evidence>
<gene>
    <name evidence="1" type="primary">pyrG</name>
    <name type="ordered locus">PST_1555</name>
</gene>
<name>PYRG_STUS1</name>
<feature type="chain" id="PRO_1000139538" description="CTP synthase">
    <location>
        <begin position="1"/>
        <end position="543"/>
    </location>
</feature>
<feature type="domain" description="Glutamine amidotransferase type-1" evidence="1">
    <location>
        <begin position="290"/>
        <end position="541"/>
    </location>
</feature>
<feature type="region of interest" description="Amidoligase domain" evidence="1">
    <location>
        <begin position="1"/>
        <end position="265"/>
    </location>
</feature>
<feature type="active site" description="Nucleophile; for glutamine hydrolysis" evidence="1">
    <location>
        <position position="378"/>
    </location>
</feature>
<feature type="active site" evidence="1">
    <location>
        <position position="514"/>
    </location>
</feature>
<feature type="active site" evidence="1">
    <location>
        <position position="516"/>
    </location>
</feature>
<feature type="binding site" evidence="1">
    <location>
        <position position="13"/>
    </location>
    <ligand>
        <name>CTP</name>
        <dbReference type="ChEBI" id="CHEBI:37563"/>
        <note>allosteric inhibitor</note>
    </ligand>
</feature>
<feature type="binding site" evidence="1">
    <location>
        <position position="13"/>
    </location>
    <ligand>
        <name>UTP</name>
        <dbReference type="ChEBI" id="CHEBI:46398"/>
    </ligand>
</feature>
<feature type="binding site" evidence="1">
    <location>
        <begin position="14"/>
        <end position="19"/>
    </location>
    <ligand>
        <name>ATP</name>
        <dbReference type="ChEBI" id="CHEBI:30616"/>
    </ligand>
</feature>
<feature type="binding site" evidence="1">
    <location>
        <position position="71"/>
    </location>
    <ligand>
        <name>ATP</name>
        <dbReference type="ChEBI" id="CHEBI:30616"/>
    </ligand>
</feature>
<feature type="binding site" evidence="1">
    <location>
        <position position="71"/>
    </location>
    <ligand>
        <name>Mg(2+)</name>
        <dbReference type="ChEBI" id="CHEBI:18420"/>
    </ligand>
</feature>
<feature type="binding site" evidence="1">
    <location>
        <position position="139"/>
    </location>
    <ligand>
        <name>Mg(2+)</name>
        <dbReference type="ChEBI" id="CHEBI:18420"/>
    </ligand>
</feature>
<feature type="binding site" evidence="1">
    <location>
        <begin position="146"/>
        <end position="148"/>
    </location>
    <ligand>
        <name>CTP</name>
        <dbReference type="ChEBI" id="CHEBI:37563"/>
        <note>allosteric inhibitor</note>
    </ligand>
</feature>
<feature type="binding site" evidence="1">
    <location>
        <begin position="186"/>
        <end position="191"/>
    </location>
    <ligand>
        <name>CTP</name>
        <dbReference type="ChEBI" id="CHEBI:37563"/>
        <note>allosteric inhibitor</note>
    </ligand>
</feature>
<feature type="binding site" evidence="1">
    <location>
        <begin position="186"/>
        <end position="191"/>
    </location>
    <ligand>
        <name>UTP</name>
        <dbReference type="ChEBI" id="CHEBI:46398"/>
    </ligand>
</feature>
<feature type="binding site" evidence="1">
    <location>
        <position position="222"/>
    </location>
    <ligand>
        <name>CTP</name>
        <dbReference type="ChEBI" id="CHEBI:37563"/>
        <note>allosteric inhibitor</note>
    </ligand>
</feature>
<feature type="binding site" evidence="1">
    <location>
        <position position="222"/>
    </location>
    <ligand>
        <name>UTP</name>
        <dbReference type="ChEBI" id="CHEBI:46398"/>
    </ligand>
</feature>
<feature type="binding site" evidence="1">
    <location>
        <position position="351"/>
    </location>
    <ligand>
        <name>L-glutamine</name>
        <dbReference type="ChEBI" id="CHEBI:58359"/>
    </ligand>
</feature>
<feature type="binding site" evidence="1">
    <location>
        <begin position="379"/>
        <end position="382"/>
    </location>
    <ligand>
        <name>L-glutamine</name>
        <dbReference type="ChEBI" id="CHEBI:58359"/>
    </ligand>
</feature>
<feature type="binding site" evidence="1">
    <location>
        <position position="402"/>
    </location>
    <ligand>
        <name>L-glutamine</name>
        <dbReference type="ChEBI" id="CHEBI:58359"/>
    </ligand>
</feature>
<feature type="binding site" evidence="1">
    <location>
        <position position="469"/>
    </location>
    <ligand>
        <name>L-glutamine</name>
        <dbReference type="ChEBI" id="CHEBI:58359"/>
    </ligand>
</feature>
<dbReference type="EC" id="6.3.4.2" evidence="1"/>
<dbReference type="EMBL" id="CP000304">
    <property type="protein sequence ID" value="ABP79240.1"/>
    <property type="molecule type" value="Genomic_DNA"/>
</dbReference>
<dbReference type="RefSeq" id="WP_011912718.1">
    <property type="nucleotide sequence ID" value="NC_009434.1"/>
</dbReference>
<dbReference type="SMR" id="A4VJT9"/>
<dbReference type="MEROPS" id="C26.964"/>
<dbReference type="KEGG" id="psa:PST_1555"/>
<dbReference type="eggNOG" id="COG0504">
    <property type="taxonomic scope" value="Bacteria"/>
</dbReference>
<dbReference type="HOGENOM" id="CLU_011675_5_0_6"/>
<dbReference type="UniPathway" id="UPA00159">
    <property type="reaction ID" value="UER00277"/>
</dbReference>
<dbReference type="Proteomes" id="UP000000233">
    <property type="component" value="Chromosome"/>
</dbReference>
<dbReference type="GO" id="GO:0005829">
    <property type="term" value="C:cytosol"/>
    <property type="evidence" value="ECO:0007669"/>
    <property type="project" value="TreeGrafter"/>
</dbReference>
<dbReference type="GO" id="GO:0005524">
    <property type="term" value="F:ATP binding"/>
    <property type="evidence" value="ECO:0007669"/>
    <property type="project" value="UniProtKB-KW"/>
</dbReference>
<dbReference type="GO" id="GO:0003883">
    <property type="term" value="F:CTP synthase activity"/>
    <property type="evidence" value="ECO:0007669"/>
    <property type="project" value="UniProtKB-UniRule"/>
</dbReference>
<dbReference type="GO" id="GO:0004359">
    <property type="term" value="F:glutaminase activity"/>
    <property type="evidence" value="ECO:0007669"/>
    <property type="project" value="RHEA"/>
</dbReference>
<dbReference type="GO" id="GO:0042802">
    <property type="term" value="F:identical protein binding"/>
    <property type="evidence" value="ECO:0007669"/>
    <property type="project" value="TreeGrafter"/>
</dbReference>
<dbReference type="GO" id="GO:0046872">
    <property type="term" value="F:metal ion binding"/>
    <property type="evidence" value="ECO:0007669"/>
    <property type="project" value="UniProtKB-KW"/>
</dbReference>
<dbReference type="GO" id="GO:0044210">
    <property type="term" value="P:'de novo' CTP biosynthetic process"/>
    <property type="evidence" value="ECO:0007669"/>
    <property type="project" value="UniProtKB-UniRule"/>
</dbReference>
<dbReference type="GO" id="GO:0019856">
    <property type="term" value="P:pyrimidine nucleobase biosynthetic process"/>
    <property type="evidence" value="ECO:0007669"/>
    <property type="project" value="TreeGrafter"/>
</dbReference>
<dbReference type="CDD" id="cd03113">
    <property type="entry name" value="CTPS_N"/>
    <property type="match status" value="1"/>
</dbReference>
<dbReference type="CDD" id="cd01746">
    <property type="entry name" value="GATase1_CTP_Synthase"/>
    <property type="match status" value="1"/>
</dbReference>
<dbReference type="FunFam" id="3.40.50.300:FF:000009">
    <property type="entry name" value="CTP synthase"/>
    <property type="match status" value="1"/>
</dbReference>
<dbReference type="FunFam" id="3.40.50.880:FF:000002">
    <property type="entry name" value="CTP synthase"/>
    <property type="match status" value="1"/>
</dbReference>
<dbReference type="Gene3D" id="3.40.50.880">
    <property type="match status" value="1"/>
</dbReference>
<dbReference type="Gene3D" id="3.40.50.300">
    <property type="entry name" value="P-loop containing nucleotide triphosphate hydrolases"/>
    <property type="match status" value="1"/>
</dbReference>
<dbReference type="HAMAP" id="MF_01227">
    <property type="entry name" value="PyrG"/>
    <property type="match status" value="1"/>
</dbReference>
<dbReference type="InterPro" id="IPR029062">
    <property type="entry name" value="Class_I_gatase-like"/>
</dbReference>
<dbReference type="InterPro" id="IPR004468">
    <property type="entry name" value="CTP_synthase"/>
</dbReference>
<dbReference type="InterPro" id="IPR017456">
    <property type="entry name" value="CTP_synthase_N"/>
</dbReference>
<dbReference type="InterPro" id="IPR017926">
    <property type="entry name" value="GATASE"/>
</dbReference>
<dbReference type="InterPro" id="IPR033828">
    <property type="entry name" value="GATase1_CTP_Synthase"/>
</dbReference>
<dbReference type="InterPro" id="IPR027417">
    <property type="entry name" value="P-loop_NTPase"/>
</dbReference>
<dbReference type="NCBIfam" id="NF003792">
    <property type="entry name" value="PRK05380.1"/>
    <property type="match status" value="1"/>
</dbReference>
<dbReference type="NCBIfam" id="TIGR00337">
    <property type="entry name" value="PyrG"/>
    <property type="match status" value="1"/>
</dbReference>
<dbReference type="PANTHER" id="PTHR11550">
    <property type="entry name" value="CTP SYNTHASE"/>
    <property type="match status" value="1"/>
</dbReference>
<dbReference type="PANTHER" id="PTHR11550:SF0">
    <property type="entry name" value="CTP SYNTHASE-RELATED"/>
    <property type="match status" value="1"/>
</dbReference>
<dbReference type="Pfam" id="PF06418">
    <property type="entry name" value="CTP_synth_N"/>
    <property type="match status" value="1"/>
</dbReference>
<dbReference type="Pfam" id="PF00117">
    <property type="entry name" value="GATase"/>
    <property type="match status" value="1"/>
</dbReference>
<dbReference type="SUPFAM" id="SSF52317">
    <property type="entry name" value="Class I glutamine amidotransferase-like"/>
    <property type="match status" value="1"/>
</dbReference>
<dbReference type="SUPFAM" id="SSF52540">
    <property type="entry name" value="P-loop containing nucleoside triphosphate hydrolases"/>
    <property type="match status" value="1"/>
</dbReference>
<dbReference type="PROSITE" id="PS51273">
    <property type="entry name" value="GATASE_TYPE_1"/>
    <property type="match status" value="1"/>
</dbReference>
<accession>A4VJT9</accession>
<reference key="1">
    <citation type="journal article" date="2008" name="Proc. Natl. Acad. Sci. U.S.A.">
        <title>Nitrogen fixation island and rhizosphere competence traits in the genome of root-associated Pseudomonas stutzeri A1501.</title>
        <authorList>
            <person name="Yan Y."/>
            <person name="Yang J."/>
            <person name="Dou Y."/>
            <person name="Chen M."/>
            <person name="Ping S."/>
            <person name="Peng J."/>
            <person name="Lu W."/>
            <person name="Zhang W."/>
            <person name="Yao Z."/>
            <person name="Li H."/>
            <person name="Liu W."/>
            <person name="He S."/>
            <person name="Geng L."/>
            <person name="Zhang X."/>
            <person name="Yang F."/>
            <person name="Yu H."/>
            <person name="Zhan Y."/>
            <person name="Li D."/>
            <person name="Lin Z."/>
            <person name="Wang Y."/>
            <person name="Elmerich C."/>
            <person name="Lin M."/>
            <person name="Jin Q."/>
        </authorList>
    </citation>
    <scope>NUCLEOTIDE SEQUENCE [LARGE SCALE GENOMIC DNA]</scope>
    <source>
        <strain>A1501</strain>
    </source>
</reference>
<comment type="function">
    <text evidence="1">Catalyzes the ATP-dependent amination of UTP to CTP with either L-glutamine or ammonia as the source of nitrogen. Regulates intracellular CTP levels through interactions with the four ribonucleotide triphosphates.</text>
</comment>
<comment type="catalytic activity">
    <reaction evidence="1">
        <text>UTP + L-glutamine + ATP + H2O = CTP + L-glutamate + ADP + phosphate + 2 H(+)</text>
        <dbReference type="Rhea" id="RHEA:26426"/>
        <dbReference type="ChEBI" id="CHEBI:15377"/>
        <dbReference type="ChEBI" id="CHEBI:15378"/>
        <dbReference type="ChEBI" id="CHEBI:29985"/>
        <dbReference type="ChEBI" id="CHEBI:30616"/>
        <dbReference type="ChEBI" id="CHEBI:37563"/>
        <dbReference type="ChEBI" id="CHEBI:43474"/>
        <dbReference type="ChEBI" id="CHEBI:46398"/>
        <dbReference type="ChEBI" id="CHEBI:58359"/>
        <dbReference type="ChEBI" id="CHEBI:456216"/>
        <dbReference type="EC" id="6.3.4.2"/>
    </reaction>
</comment>
<comment type="catalytic activity">
    <reaction evidence="1">
        <text>L-glutamine + H2O = L-glutamate + NH4(+)</text>
        <dbReference type="Rhea" id="RHEA:15889"/>
        <dbReference type="ChEBI" id="CHEBI:15377"/>
        <dbReference type="ChEBI" id="CHEBI:28938"/>
        <dbReference type="ChEBI" id="CHEBI:29985"/>
        <dbReference type="ChEBI" id="CHEBI:58359"/>
    </reaction>
</comment>
<comment type="catalytic activity">
    <reaction evidence="1">
        <text>UTP + NH4(+) + ATP = CTP + ADP + phosphate + 2 H(+)</text>
        <dbReference type="Rhea" id="RHEA:16597"/>
        <dbReference type="ChEBI" id="CHEBI:15378"/>
        <dbReference type="ChEBI" id="CHEBI:28938"/>
        <dbReference type="ChEBI" id="CHEBI:30616"/>
        <dbReference type="ChEBI" id="CHEBI:37563"/>
        <dbReference type="ChEBI" id="CHEBI:43474"/>
        <dbReference type="ChEBI" id="CHEBI:46398"/>
        <dbReference type="ChEBI" id="CHEBI:456216"/>
    </reaction>
</comment>
<comment type="activity regulation">
    <text evidence="1">Allosterically activated by GTP, when glutamine is the substrate; GTP has no effect on the reaction when ammonia is the substrate. The allosteric effector GTP functions by stabilizing the protein conformation that binds the tetrahedral intermediate(s) formed during glutamine hydrolysis. Inhibited by the product CTP, via allosteric rather than competitive inhibition.</text>
</comment>
<comment type="pathway">
    <text evidence="1">Pyrimidine metabolism; CTP biosynthesis via de novo pathway; CTP from UDP: step 2/2.</text>
</comment>
<comment type="subunit">
    <text evidence="1">Homotetramer.</text>
</comment>
<comment type="miscellaneous">
    <text evidence="1">CTPSs have evolved a hybrid strategy for distinguishing between UTP and CTP. The overlapping regions of the product feedback inhibitory and substrate sites recognize a common feature in both compounds, the triphosphate moiety. To differentiate isosteric substrate and product pyrimidine rings, an additional pocket far from the expected kinase/ligase catalytic site, specifically recognizes the cytosine and ribose portions of the product inhibitor.</text>
</comment>
<comment type="similarity">
    <text evidence="1">Belongs to the CTP synthase family.</text>
</comment>
<protein>
    <recommendedName>
        <fullName evidence="1">CTP synthase</fullName>
        <ecNumber evidence="1">6.3.4.2</ecNumber>
    </recommendedName>
    <alternativeName>
        <fullName evidence="1">Cytidine 5'-triphosphate synthase</fullName>
    </alternativeName>
    <alternativeName>
        <fullName evidence="1">Cytidine triphosphate synthetase</fullName>
        <shortName evidence="1">CTP synthetase</shortName>
        <shortName evidence="1">CTPS</shortName>
    </alternativeName>
    <alternativeName>
        <fullName evidence="1">UTP--ammonia ligase</fullName>
    </alternativeName>
</protein>
<organism>
    <name type="scientific">Stutzerimonas stutzeri (strain A1501)</name>
    <name type="common">Pseudomonas stutzeri</name>
    <dbReference type="NCBI Taxonomy" id="379731"/>
    <lineage>
        <taxon>Bacteria</taxon>
        <taxon>Pseudomonadati</taxon>
        <taxon>Pseudomonadota</taxon>
        <taxon>Gammaproteobacteria</taxon>
        <taxon>Pseudomonadales</taxon>
        <taxon>Pseudomonadaceae</taxon>
        <taxon>Stutzerimonas</taxon>
    </lineage>
</organism>
<keyword id="KW-0067">ATP-binding</keyword>
<keyword id="KW-0315">Glutamine amidotransferase</keyword>
<keyword id="KW-0436">Ligase</keyword>
<keyword id="KW-0460">Magnesium</keyword>
<keyword id="KW-0479">Metal-binding</keyword>
<keyword id="KW-0547">Nucleotide-binding</keyword>
<keyword id="KW-0665">Pyrimidine biosynthesis</keyword>
<keyword id="KW-1185">Reference proteome</keyword>
<proteinExistence type="inferred from homology"/>
<sequence length="543" mass="59744">MTRYIFVTGGVVSSLGKGIASASLAAILEARGLKVTMLKLDPYINVDPGTMSPFQHGEVFVTHDGAETDLDLGHYERFIRTRMTQNNNFTTGRVYEDVLRRERRGDYLGATIQVIPHITDEIKRRIIKGAGDADVALVEVGGTVGDIESQPFLEAIRQLRVEVGAKRAMLMHLTLVPYIATAGETKTKPTQHSVKELRSIGLQPDVLVCRSDRAIDVSSRRKIALFTNVEERAVISLPDADTIYKIPGILHAQGLDDYVVERFGLECRGADLSEWDRVVDAKLHPEKEVNIAMVGKYMELLDAYKSLIEAMSHAGIQSRTKVNLRYIDSEDIENQGTGLLEGVDAILVPGGFGLRGVEGKIATVRYARENKIPYLGICLGMQVAVIEFARDVLGWSDANSTEFDKDSGHPVVGLITEWADASGNTEVRTEASDLGGTMRLGAQECGLEPGSKVFECYGKERIVERHRHRYEVNNNLLPQLQAAGLKITGRSGDGALVEVVEAPDHPWFVACQFHPEFTSTPRDGHPLFSGFVNAALEYKAKKA</sequence>